<proteinExistence type="inferred from homology"/>
<reference key="1">
    <citation type="journal article" date="2007" name="PLoS ONE">
        <title>Molecular correlates of host specialization in Staphylococcus aureus.</title>
        <authorList>
            <person name="Herron-Olson L."/>
            <person name="Fitzgerald J.R."/>
            <person name="Musser J.M."/>
            <person name="Kapur V."/>
        </authorList>
    </citation>
    <scope>NUCLEOTIDE SEQUENCE [LARGE SCALE GENOMIC DNA]</scope>
    <source>
        <strain>bovine RF122 / ET3-1</strain>
    </source>
</reference>
<dbReference type="EC" id="2.5.1.78" evidence="1"/>
<dbReference type="EMBL" id="AJ938182">
    <property type="protein sequence ID" value="CAI81314.1"/>
    <property type="molecule type" value="Genomic_DNA"/>
</dbReference>
<dbReference type="SMR" id="Q2YTM0"/>
<dbReference type="KEGG" id="sab:SAB1625c"/>
<dbReference type="HOGENOM" id="CLU_089358_1_1_9"/>
<dbReference type="UniPathway" id="UPA00275">
    <property type="reaction ID" value="UER00404"/>
</dbReference>
<dbReference type="GO" id="GO:0005829">
    <property type="term" value="C:cytosol"/>
    <property type="evidence" value="ECO:0007669"/>
    <property type="project" value="TreeGrafter"/>
</dbReference>
<dbReference type="GO" id="GO:0009349">
    <property type="term" value="C:riboflavin synthase complex"/>
    <property type="evidence" value="ECO:0007669"/>
    <property type="project" value="InterPro"/>
</dbReference>
<dbReference type="GO" id="GO:0000906">
    <property type="term" value="F:6,7-dimethyl-8-ribityllumazine synthase activity"/>
    <property type="evidence" value="ECO:0007669"/>
    <property type="project" value="UniProtKB-UniRule"/>
</dbReference>
<dbReference type="GO" id="GO:0009231">
    <property type="term" value="P:riboflavin biosynthetic process"/>
    <property type="evidence" value="ECO:0007669"/>
    <property type="project" value="UniProtKB-UniRule"/>
</dbReference>
<dbReference type="CDD" id="cd09209">
    <property type="entry name" value="Lumazine_synthase-I"/>
    <property type="match status" value="1"/>
</dbReference>
<dbReference type="FunFam" id="3.40.50.960:FF:000001">
    <property type="entry name" value="6,7-dimethyl-8-ribityllumazine synthase"/>
    <property type="match status" value="1"/>
</dbReference>
<dbReference type="Gene3D" id="3.40.50.960">
    <property type="entry name" value="Lumazine/riboflavin synthase"/>
    <property type="match status" value="1"/>
</dbReference>
<dbReference type="HAMAP" id="MF_00178">
    <property type="entry name" value="Lumazine_synth"/>
    <property type="match status" value="1"/>
</dbReference>
<dbReference type="InterPro" id="IPR034964">
    <property type="entry name" value="LS"/>
</dbReference>
<dbReference type="InterPro" id="IPR002180">
    <property type="entry name" value="LS/RS"/>
</dbReference>
<dbReference type="InterPro" id="IPR036467">
    <property type="entry name" value="LS/RS_sf"/>
</dbReference>
<dbReference type="NCBIfam" id="TIGR00114">
    <property type="entry name" value="lumazine-synth"/>
    <property type="match status" value="1"/>
</dbReference>
<dbReference type="NCBIfam" id="NF000812">
    <property type="entry name" value="PRK00061.1-4"/>
    <property type="match status" value="1"/>
</dbReference>
<dbReference type="PANTHER" id="PTHR21058:SF0">
    <property type="entry name" value="6,7-DIMETHYL-8-RIBITYLLUMAZINE SYNTHASE"/>
    <property type="match status" value="1"/>
</dbReference>
<dbReference type="PANTHER" id="PTHR21058">
    <property type="entry name" value="6,7-DIMETHYL-8-RIBITYLLUMAZINE SYNTHASE DMRL SYNTHASE LUMAZINE SYNTHASE"/>
    <property type="match status" value="1"/>
</dbReference>
<dbReference type="Pfam" id="PF00885">
    <property type="entry name" value="DMRL_synthase"/>
    <property type="match status" value="1"/>
</dbReference>
<dbReference type="SUPFAM" id="SSF52121">
    <property type="entry name" value="Lumazine synthase"/>
    <property type="match status" value="1"/>
</dbReference>
<protein>
    <recommendedName>
        <fullName evidence="1">6,7-dimethyl-8-ribityllumazine synthase</fullName>
        <shortName evidence="1">DMRL synthase</shortName>
        <shortName evidence="1">LS</shortName>
        <shortName evidence="1">Lumazine synthase</shortName>
        <ecNumber evidence="1">2.5.1.78</ecNumber>
    </recommendedName>
</protein>
<feature type="chain" id="PRO_1000040523" description="6,7-dimethyl-8-ribityllumazine synthase">
    <location>
        <begin position="1"/>
        <end position="154"/>
    </location>
</feature>
<feature type="active site" description="Proton donor" evidence="1">
    <location>
        <position position="87"/>
    </location>
</feature>
<feature type="binding site" evidence="1">
    <location>
        <position position="21"/>
    </location>
    <ligand>
        <name>5-amino-6-(D-ribitylamino)uracil</name>
        <dbReference type="ChEBI" id="CHEBI:15934"/>
    </ligand>
</feature>
<feature type="binding site" evidence="1">
    <location>
        <begin position="55"/>
        <end position="57"/>
    </location>
    <ligand>
        <name>5-amino-6-(D-ribitylamino)uracil</name>
        <dbReference type="ChEBI" id="CHEBI:15934"/>
    </ligand>
</feature>
<feature type="binding site" evidence="1">
    <location>
        <begin position="79"/>
        <end position="81"/>
    </location>
    <ligand>
        <name>5-amino-6-(D-ribitylamino)uracil</name>
        <dbReference type="ChEBI" id="CHEBI:15934"/>
    </ligand>
</feature>
<feature type="binding site" evidence="1">
    <location>
        <begin position="84"/>
        <end position="85"/>
    </location>
    <ligand>
        <name>(2S)-2-hydroxy-3-oxobutyl phosphate</name>
        <dbReference type="ChEBI" id="CHEBI:58830"/>
    </ligand>
</feature>
<feature type="binding site" evidence="1">
    <location>
        <position position="112"/>
    </location>
    <ligand>
        <name>5-amino-6-(D-ribitylamino)uracil</name>
        <dbReference type="ChEBI" id="CHEBI:15934"/>
    </ligand>
</feature>
<feature type="binding site" evidence="1">
    <location>
        <position position="126"/>
    </location>
    <ligand>
        <name>(2S)-2-hydroxy-3-oxobutyl phosphate</name>
        <dbReference type="ChEBI" id="CHEBI:58830"/>
    </ligand>
</feature>
<gene>
    <name evidence="1" type="primary">ribH</name>
    <name type="ordered locus">SAB1625c</name>
</gene>
<sequence length="154" mass="16396">MNFEGKLIGKDLKVAIVVSRFNDFITGRLLEGAKDTLIRHDVNEDNIDVAFVPGAFEIPLVAKKLASSGNYDAVITLGCVIRGATSHYDYVCNEVAKGVSKVNDQTNVPVIFGILTTESIEQAVERAGTKAGNKGAEAAVSAIEMANLLKSIKA</sequence>
<accession>Q2YTM0</accession>
<organism>
    <name type="scientific">Staphylococcus aureus (strain bovine RF122 / ET3-1)</name>
    <dbReference type="NCBI Taxonomy" id="273036"/>
    <lineage>
        <taxon>Bacteria</taxon>
        <taxon>Bacillati</taxon>
        <taxon>Bacillota</taxon>
        <taxon>Bacilli</taxon>
        <taxon>Bacillales</taxon>
        <taxon>Staphylococcaceae</taxon>
        <taxon>Staphylococcus</taxon>
    </lineage>
</organism>
<comment type="function">
    <text evidence="1">Catalyzes the formation of 6,7-dimethyl-8-ribityllumazine by condensation of 5-amino-6-(D-ribitylamino)uracil with 3,4-dihydroxy-2-butanone 4-phosphate. This is the penultimate step in the biosynthesis of riboflavin.</text>
</comment>
<comment type="catalytic activity">
    <reaction evidence="1">
        <text>(2S)-2-hydroxy-3-oxobutyl phosphate + 5-amino-6-(D-ribitylamino)uracil = 6,7-dimethyl-8-(1-D-ribityl)lumazine + phosphate + 2 H2O + H(+)</text>
        <dbReference type="Rhea" id="RHEA:26152"/>
        <dbReference type="ChEBI" id="CHEBI:15377"/>
        <dbReference type="ChEBI" id="CHEBI:15378"/>
        <dbReference type="ChEBI" id="CHEBI:15934"/>
        <dbReference type="ChEBI" id="CHEBI:43474"/>
        <dbReference type="ChEBI" id="CHEBI:58201"/>
        <dbReference type="ChEBI" id="CHEBI:58830"/>
        <dbReference type="EC" id="2.5.1.78"/>
    </reaction>
</comment>
<comment type="pathway">
    <text evidence="1">Cofactor biosynthesis; riboflavin biosynthesis; riboflavin from 2-hydroxy-3-oxobutyl phosphate and 5-amino-6-(D-ribitylamino)uracil: step 1/2.</text>
</comment>
<comment type="subunit">
    <text evidence="1">Forms an icosahedral capsid composed of 60 subunits, arranged as a dodecamer of pentamers.</text>
</comment>
<comment type="similarity">
    <text evidence="1">Belongs to the DMRL synthase family.</text>
</comment>
<evidence type="ECO:0000255" key="1">
    <source>
        <dbReference type="HAMAP-Rule" id="MF_00178"/>
    </source>
</evidence>
<name>RISB_STAAB</name>
<keyword id="KW-0686">Riboflavin biosynthesis</keyword>
<keyword id="KW-0808">Transferase</keyword>